<organism>
    <name type="scientific">Vibrio cholerae serotype O1 (strain ATCC 39541 / Classical Ogawa 395 / O395)</name>
    <dbReference type="NCBI Taxonomy" id="345073"/>
    <lineage>
        <taxon>Bacteria</taxon>
        <taxon>Pseudomonadati</taxon>
        <taxon>Pseudomonadota</taxon>
        <taxon>Gammaproteobacteria</taxon>
        <taxon>Vibrionales</taxon>
        <taxon>Vibrionaceae</taxon>
        <taxon>Vibrio</taxon>
    </lineage>
</organism>
<protein>
    <recommendedName>
        <fullName evidence="1">Recombination protein RecR</fullName>
    </recommendedName>
</protein>
<dbReference type="EMBL" id="CP000627">
    <property type="protein sequence ID" value="ABQ19944.1"/>
    <property type="molecule type" value="Genomic_DNA"/>
</dbReference>
<dbReference type="EMBL" id="CP001235">
    <property type="protein sequence ID" value="ACP09082.1"/>
    <property type="molecule type" value="Genomic_DNA"/>
</dbReference>
<dbReference type="RefSeq" id="WP_001260579.1">
    <property type="nucleotide sequence ID" value="NZ_JAACZH010000005.1"/>
</dbReference>
<dbReference type="SMR" id="A5F2N5"/>
<dbReference type="GeneID" id="69720250"/>
<dbReference type="KEGG" id="vco:VC0395_A0574"/>
<dbReference type="KEGG" id="vcr:VC395_1070"/>
<dbReference type="PATRIC" id="fig|345073.21.peg.1038"/>
<dbReference type="eggNOG" id="COG0353">
    <property type="taxonomic scope" value="Bacteria"/>
</dbReference>
<dbReference type="HOGENOM" id="CLU_060739_1_2_6"/>
<dbReference type="OrthoDB" id="9802672at2"/>
<dbReference type="Proteomes" id="UP000000249">
    <property type="component" value="Chromosome 2"/>
</dbReference>
<dbReference type="GO" id="GO:0003677">
    <property type="term" value="F:DNA binding"/>
    <property type="evidence" value="ECO:0007669"/>
    <property type="project" value="UniProtKB-UniRule"/>
</dbReference>
<dbReference type="GO" id="GO:0008270">
    <property type="term" value="F:zinc ion binding"/>
    <property type="evidence" value="ECO:0007669"/>
    <property type="project" value="UniProtKB-KW"/>
</dbReference>
<dbReference type="GO" id="GO:0006310">
    <property type="term" value="P:DNA recombination"/>
    <property type="evidence" value="ECO:0007669"/>
    <property type="project" value="UniProtKB-UniRule"/>
</dbReference>
<dbReference type="GO" id="GO:0006281">
    <property type="term" value="P:DNA repair"/>
    <property type="evidence" value="ECO:0007669"/>
    <property type="project" value="UniProtKB-UniRule"/>
</dbReference>
<dbReference type="CDD" id="cd01025">
    <property type="entry name" value="TOPRIM_recR"/>
    <property type="match status" value="1"/>
</dbReference>
<dbReference type="FunFam" id="1.10.8.420:FF:000001">
    <property type="entry name" value="Recombination protein RecR"/>
    <property type="match status" value="1"/>
</dbReference>
<dbReference type="FunFam" id="3.40.1360.10:FF:000001">
    <property type="entry name" value="Recombination protein RecR"/>
    <property type="match status" value="1"/>
</dbReference>
<dbReference type="Gene3D" id="3.30.60.80">
    <property type="match status" value="1"/>
</dbReference>
<dbReference type="Gene3D" id="3.40.1360.10">
    <property type="match status" value="1"/>
</dbReference>
<dbReference type="Gene3D" id="6.10.250.240">
    <property type="match status" value="1"/>
</dbReference>
<dbReference type="Gene3D" id="1.10.8.420">
    <property type="entry name" value="RecR Domain 1"/>
    <property type="match status" value="1"/>
</dbReference>
<dbReference type="HAMAP" id="MF_00017">
    <property type="entry name" value="RecR"/>
    <property type="match status" value="1"/>
</dbReference>
<dbReference type="InterPro" id="IPR000093">
    <property type="entry name" value="DNA_Rcmb_RecR"/>
</dbReference>
<dbReference type="InterPro" id="IPR023627">
    <property type="entry name" value="Rcmb_RecR"/>
</dbReference>
<dbReference type="InterPro" id="IPR015967">
    <property type="entry name" value="Rcmb_RecR_Znf"/>
</dbReference>
<dbReference type="InterPro" id="IPR006171">
    <property type="entry name" value="TOPRIM_dom"/>
</dbReference>
<dbReference type="InterPro" id="IPR034137">
    <property type="entry name" value="TOPRIM_RecR"/>
</dbReference>
<dbReference type="NCBIfam" id="TIGR00615">
    <property type="entry name" value="recR"/>
    <property type="match status" value="1"/>
</dbReference>
<dbReference type="PANTHER" id="PTHR30446">
    <property type="entry name" value="RECOMBINATION PROTEIN RECR"/>
    <property type="match status" value="1"/>
</dbReference>
<dbReference type="PANTHER" id="PTHR30446:SF0">
    <property type="entry name" value="RECOMBINATION PROTEIN RECR"/>
    <property type="match status" value="1"/>
</dbReference>
<dbReference type="Pfam" id="PF21175">
    <property type="entry name" value="RecR_C"/>
    <property type="match status" value="1"/>
</dbReference>
<dbReference type="Pfam" id="PF21176">
    <property type="entry name" value="RecR_HhH"/>
    <property type="match status" value="1"/>
</dbReference>
<dbReference type="Pfam" id="PF02132">
    <property type="entry name" value="RecR_ZnF"/>
    <property type="match status" value="1"/>
</dbReference>
<dbReference type="Pfam" id="PF13662">
    <property type="entry name" value="Toprim_4"/>
    <property type="match status" value="1"/>
</dbReference>
<dbReference type="SMART" id="SM00493">
    <property type="entry name" value="TOPRIM"/>
    <property type="match status" value="1"/>
</dbReference>
<dbReference type="SUPFAM" id="SSF111304">
    <property type="entry name" value="Recombination protein RecR"/>
    <property type="match status" value="1"/>
</dbReference>
<dbReference type="PROSITE" id="PS50880">
    <property type="entry name" value="TOPRIM"/>
    <property type="match status" value="1"/>
</dbReference>
<feature type="chain" id="PRO_1000070977" description="Recombination protein RecR">
    <location>
        <begin position="1"/>
        <end position="200"/>
    </location>
</feature>
<feature type="domain" description="Toprim" evidence="1">
    <location>
        <begin position="81"/>
        <end position="176"/>
    </location>
</feature>
<feature type="zinc finger region" description="C4-type" evidence="1">
    <location>
        <begin position="57"/>
        <end position="72"/>
    </location>
</feature>
<keyword id="KW-0227">DNA damage</keyword>
<keyword id="KW-0233">DNA recombination</keyword>
<keyword id="KW-0234">DNA repair</keyword>
<keyword id="KW-0479">Metal-binding</keyword>
<keyword id="KW-0862">Zinc</keyword>
<keyword id="KW-0863">Zinc-finger</keyword>
<reference key="1">
    <citation type="submission" date="2007-03" db="EMBL/GenBank/DDBJ databases">
        <authorList>
            <person name="Heidelberg J."/>
        </authorList>
    </citation>
    <scope>NUCLEOTIDE SEQUENCE [LARGE SCALE GENOMIC DNA]</scope>
    <source>
        <strain>ATCC 39541 / Classical Ogawa 395 / O395</strain>
    </source>
</reference>
<reference key="2">
    <citation type="journal article" date="2008" name="PLoS ONE">
        <title>A recalibrated molecular clock and independent origins for the cholera pandemic clones.</title>
        <authorList>
            <person name="Feng L."/>
            <person name="Reeves P.R."/>
            <person name="Lan R."/>
            <person name="Ren Y."/>
            <person name="Gao C."/>
            <person name="Zhou Z."/>
            <person name="Ren Y."/>
            <person name="Cheng J."/>
            <person name="Wang W."/>
            <person name="Wang J."/>
            <person name="Qian W."/>
            <person name="Li D."/>
            <person name="Wang L."/>
        </authorList>
    </citation>
    <scope>NUCLEOTIDE SEQUENCE [LARGE SCALE GENOMIC DNA]</scope>
    <source>
        <strain>ATCC 39541 / Classical Ogawa 395 / O395</strain>
    </source>
</reference>
<proteinExistence type="inferred from homology"/>
<gene>
    <name evidence="1" type="primary">recR</name>
    <name type="ordered locus">VC0395_A0574</name>
    <name type="ordered locus">VC395_1070</name>
</gene>
<evidence type="ECO:0000255" key="1">
    <source>
        <dbReference type="HAMAP-Rule" id="MF_00017"/>
    </source>
</evidence>
<name>RECR_VIBC3</name>
<accession>A5F2N5</accession>
<accession>C3LZ66</accession>
<sequence length="200" mass="21841">MRTSHMLEHLMEALRCLPGVGPKSAQRMAFHLLQRDRKGGLQLAEALSQAMVEIGHCQECRTFTEQDVCHICSNPKRKENGQLCVVESPADIAALEATGQFSGRYFVLMGHLSPLDGIGPSDIGLDTLDYRLQRGDISEVILATNPTVEGEATAQYIAELCREHQVTASRIAHGVPVGGELELVDGTTLSHSLLGRHKLF</sequence>
<comment type="function">
    <text evidence="1">May play a role in DNA repair. It seems to be involved in an RecBC-independent recombinational process of DNA repair. It may act with RecF and RecO.</text>
</comment>
<comment type="similarity">
    <text evidence="1">Belongs to the RecR family.</text>
</comment>